<evidence type="ECO:0000255" key="1">
    <source>
        <dbReference type="HAMAP-Rule" id="MF_00373"/>
    </source>
</evidence>
<evidence type="ECO:0000256" key="2">
    <source>
        <dbReference type="SAM" id="MobiDB-lite"/>
    </source>
</evidence>
<evidence type="ECO:0000305" key="3"/>
<gene>
    <name evidence="1" type="primary">rpmB</name>
    <name type="ordered locus">Noc_2640</name>
</gene>
<organism>
    <name type="scientific">Nitrosococcus oceani (strain ATCC 19707 / BCRC 17464 / JCM 30415 / NCIMB 11848 / C-107)</name>
    <dbReference type="NCBI Taxonomy" id="323261"/>
    <lineage>
        <taxon>Bacteria</taxon>
        <taxon>Pseudomonadati</taxon>
        <taxon>Pseudomonadota</taxon>
        <taxon>Gammaproteobacteria</taxon>
        <taxon>Chromatiales</taxon>
        <taxon>Chromatiaceae</taxon>
        <taxon>Nitrosococcus</taxon>
    </lineage>
</organism>
<accession>Q3J7V3</accession>
<reference key="1">
    <citation type="journal article" date="2006" name="Appl. Environ. Microbiol.">
        <title>Complete genome sequence of the marine, chemolithoautotrophic, ammonia-oxidizing bacterium Nitrosococcus oceani ATCC 19707.</title>
        <authorList>
            <person name="Klotz M.G."/>
            <person name="Arp D.J."/>
            <person name="Chain P.S.G."/>
            <person name="El-Sheikh A.F."/>
            <person name="Hauser L.J."/>
            <person name="Hommes N.G."/>
            <person name="Larimer F.W."/>
            <person name="Malfatti S.A."/>
            <person name="Norton J.M."/>
            <person name="Poret-Peterson A.T."/>
            <person name="Vergez L.M."/>
            <person name="Ward B.B."/>
        </authorList>
    </citation>
    <scope>NUCLEOTIDE SEQUENCE [LARGE SCALE GENOMIC DNA]</scope>
    <source>
        <strain>ATCC 19707 / BCRC 17464 / JCM 30415 / NCIMB 11848 / C-107</strain>
    </source>
</reference>
<keyword id="KW-1185">Reference proteome</keyword>
<keyword id="KW-0687">Ribonucleoprotein</keyword>
<keyword id="KW-0689">Ribosomal protein</keyword>
<proteinExistence type="inferred from homology"/>
<sequence>MSKVCQVTGKRPASGNNVSHAHNKTRRRFLPNLHTHRFWVEGENRWVKLKVSGKGLRMIDKLGIDQVLADMRTRGEKI</sequence>
<feature type="chain" id="PRO_1000007287" description="Large ribosomal subunit protein bL28">
    <location>
        <begin position="1"/>
        <end position="78"/>
    </location>
</feature>
<feature type="region of interest" description="Disordered" evidence="2">
    <location>
        <begin position="1"/>
        <end position="24"/>
    </location>
</feature>
<dbReference type="EMBL" id="CP000127">
    <property type="protein sequence ID" value="ABA59093.1"/>
    <property type="molecule type" value="Genomic_DNA"/>
</dbReference>
<dbReference type="RefSeq" id="WP_002813926.1">
    <property type="nucleotide sequence ID" value="NC_007484.1"/>
</dbReference>
<dbReference type="SMR" id="Q3J7V3"/>
<dbReference type="FunCoup" id="Q3J7V3">
    <property type="interactions" value="423"/>
</dbReference>
<dbReference type="STRING" id="323261.Noc_2640"/>
<dbReference type="KEGG" id="noc:Noc_2640"/>
<dbReference type="eggNOG" id="COG0227">
    <property type="taxonomic scope" value="Bacteria"/>
</dbReference>
<dbReference type="HOGENOM" id="CLU_064548_3_1_6"/>
<dbReference type="InParanoid" id="Q3J7V3"/>
<dbReference type="Proteomes" id="UP000006838">
    <property type="component" value="Chromosome"/>
</dbReference>
<dbReference type="GO" id="GO:0022625">
    <property type="term" value="C:cytosolic large ribosomal subunit"/>
    <property type="evidence" value="ECO:0007669"/>
    <property type="project" value="TreeGrafter"/>
</dbReference>
<dbReference type="GO" id="GO:0003735">
    <property type="term" value="F:structural constituent of ribosome"/>
    <property type="evidence" value="ECO:0007669"/>
    <property type="project" value="InterPro"/>
</dbReference>
<dbReference type="GO" id="GO:0006412">
    <property type="term" value="P:translation"/>
    <property type="evidence" value="ECO:0007669"/>
    <property type="project" value="UniProtKB-UniRule"/>
</dbReference>
<dbReference type="FunFam" id="2.30.170.40:FF:000001">
    <property type="entry name" value="50S ribosomal protein L28"/>
    <property type="match status" value="1"/>
</dbReference>
<dbReference type="Gene3D" id="2.30.170.40">
    <property type="entry name" value="Ribosomal protein L28/L24"/>
    <property type="match status" value="1"/>
</dbReference>
<dbReference type="HAMAP" id="MF_00373">
    <property type="entry name" value="Ribosomal_bL28"/>
    <property type="match status" value="1"/>
</dbReference>
<dbReference type="InterPro" id="IPR026569">
    <property type="entry name" value="Ribosomal_bL28"/>
</dbReference>
<dbReference type="InterPro" id="IPR034704">
    <property type="entry name" value="Ribosomal_bL28/bL31-like_sf"/>
</dbReference>
<dbReference type="InterPro" id="IPR001383">
    <property type="entry name" value="Ribosomal_bL28_bact-type"/>
</dbReference>
<dbReference type="InterPro" id="IPR037147">
    <property type="entry name" value="Ribosomal_bL28_sf"/>
</dbReference>
<dbReference type="NCBIfam" id="TIGR00009">
    <property type="entry name" value="L28"/>
    <property type="match status" value="1"/>
</dbReference>
<dbReference type="PANTHER" id="PTHR13528">
    <property type="entry name" value="39S RIBOSOMAL PROTEIN L28, MITOCHONDRIAL"/>
    <property type="match status" value="1"/>
</dbReference>
<dbReference type="PANTHER" id="PTHR13528:SF2">
    <property type="entry name" value="LARGE RIBOSOMAL SUBUNIT PROTEIN BL28M"/>
    <property type="match status" value="1"/>
</dbReference>
<dbReference type="Pfam" id="PF00830">
    <property type="entry name" value="Ribosomal_L28"/>
    <property type="match status" value="1"/>
</dbReference>
<dbReference type="SUPFAM" id="SSF143800">
    <property type="entry name" value="L28p-like"/>
    <property type="match status" value="1"/>
</dbReference>
<name>RL28_NITOC</name>
<comment type="similarity">
    <text evidence="1">Belongs to the bacterial ribosomal protein bL28 family.</text>
</comment>
<protein>
    <recommendedName>
        <fullName evidence="1">Large ribosomal subunit protein bL28</fullName>
    </recommendedName>
    <alternativeName>
        <fullName evidence="3">50S ribosomal protein L28</fullName>
    </alternativeName>
</protein>